<protein>
    <recommendedName>
        <fullName evidence="1">DNA-directed RNA polymerase subunit alpha</fullName>
        <shortName evidence="1">RNAP subunit alpha</shortName>
        <ecNumber evidence="1">2.7.7.6</ecNumber>
    </recommendedName>
    <alternativeName>
        <fullName evidence="1">RNA polymerase subunit alpha</fullName>
    </alternativeName>
    <alternativeName>
        <fullName evidence="1">Transcriptase subunit alpha</fullName>
    </alternativeName>
</protein>
<dbReference type="EC" id="2.7.7.6" evidence="1"/>
<dbReference type="EMBL" id="BA000033">
    <property type="protein sequence ID" value="BAB96008.1"/>
    <property type="molecule type" value="Genomic_DNA"/>
</dbReference>
<dbReference type="RefSeq" id="WP_000569649.1">
    <property type="nucleotide sequence ID" value="NC_003923.1"/>
</dbReference>
<dbReference type="SMR" id="P66707"/>
<dbReference type="KEGG" id="sam:MW2143"/>
<dbReference type="HOGENOM" id="CLU_053084_0_1_9"/>
<dbReference type="GO" id="GO:0005737">
    <property type="term" value="C:cytoplasm"/>
    <property type="evidence" value="ECO:0007669"/>
    <property type="project" value="UniProtKB-ARBA"/>
</dbReference>
<dbReference type="GO" id="GO:0000428">
    <property type="term" value="C:DNA-directed RNA polymerase complex"/>
    <property type="evidence" value="ECO:0007669"/>
    <property type="project" value="UniProtKB-KW"/>
</dbReference>
<dbReference type="GO" id="GO:0003677">
    <property type="term" value="F:DNA binding"/>
    <property type="evidence" value="ECO:0007669"/>
    <property type="project" value="UniProtKB-UniRule"/>
</dbReference>
<dbReference type="GO" id="GO:0003899">
    <property type="term" value="F:DNA-directed RNA polymerase activity"/>
    <property type="evidence" value="ECO:0007669"/>
    <property type="project" value="UniProtKB-UniRule"/>
</dbReference>
<dbReference type="GO" id="GO:0046983">
    <property type="term" value="F:protein dimerization activity"/>
    <property type="evidence" value="ECO:0007669"/>
    <property type="project" value="InterPro"/>
</dbReference>
<dbReference type="GO" id="GO:0006351">
    <property type="term" value="P:DNA-templated transcription"/>
    <property type="evidence" value="ECO:0007669"/>
    <property type="project" value="UniProtKB-UniRule"/>
</dbReference>
<dbReference type="CDD" id="cd06928">
    <property type="entry name" value="RNAP_alpha_NTD"/>
    <property type="match status" value="1"/>
</dbReference>
<dbReference type="FunFam" id="1.10.150.20:FF:000001">
    <property type="entry name" value="DNA-directed RNA polymerase subunit alpha"/>
    <property type="match status" value="1"/>
</dbReference>
<dbReference type="FunFam" id="2.170.120.12:FF:000001">
    <property type="entry name" value="DNA-directed RNA polymerase subunit alpha"/>
    <property type="match status" value="1"/>
</dbReference>
<dbReference type="Gene3D" id="1.10.150.20">
    <property type="entry name" value="5' to 3' exonuclease, C-terminal subdomain"/>
    <property type="match status" value="1"/>
</dbReference>
<dbReference type="Gene3D" id="2.170.120.12">
    <property type="entry name" value="DNA-directed RNA polymerase, insert domain"/>
    <property type="match status" value="1"/>
</dbReference>
<dbReference type="Gene3D" id="3.30.1360.10">
    <property type="entry name" value="RNA polymerase, RBP11-like subunit"/>
    <property type="match status" value="1"/>
</dbReference>
<dbReference type="HAMAP" id="MF_00059">
    <property type="entry name" value="RNApol_bact_RpoA"/>
    <property type="match status" value="1"/>
</dbReference>
<dbReference type="InterPro" id="IPR011262">
    <property type="entry name" value="DNA-dir_RNA_pol_insert"/>
</dbReference>
<dbReference type="InterPro" id="IPR011263">
    <property type="entry name" value="DNA-dir_RNA_pol_RpoA/D/Rpb3"/>
</dbReference>
<dbReference type="InterPro" id="IPR011773">
    <property type="entry name" value="DNA-dir_RpoA"/>
</dbReference>
<dbReference type="InterPro" id="IPR036603">
    <property type="entry name" value="RBP11-like"/>
</dbReference>
<dbReference type="InterPro" id="IPR011260">
    <property type="entry name" value="RNAP_asu_C"/>
</dbReference>
<dbReference type="InterPro" id="IPR036643">
    <property type="entry name" value="RNApol_insert_sf"/>
</dbReference>
<dbReference type="NCBIfam" id="NF003513">
    <property type="entry name" value="PRK05182.1-2"/>
    <property type="match status" value="1"/>
</dbReference>
<dbReference type="NCBIfam" id="NF003515">
    <property type="entry name" value="PRK05182.2-1"/>
    <property type="match status" value="1"/>
</dbReference>
<dbReference type="NCBIfam" id="NF003519">
    <property type="entry name" value="PRK05182.2-5"/>
    <property type="match status" value="1"/>
</dbReference>
<dbReference type="NCBIfam" id="TIGR02027">
    <property type="entry name" value="rpoA"/>
    <property type="match status" value="1"/>
</dbReference>
<dbReference type="Pfam" id="PF01000">
    <property type="entry name" value="RNA_pol_A_bac"/>
    <property type="match status" value="1"/>
</dbReference>
<dbReference type="Pfam" id="PF03118">
    <property type="entry name" value="RNA_pol_A_CTD"/>
    <property type="match status" value="1"/>
</dbReference>
<dbReference type="Pfam" id="PF01193">
    <property type="entry name" value="RNA_pol_L"/>
    <property type="match status" value="1"/>
</dbReference>
<dbReference type="SMART" id="SM00662">
    <property type="entry name" value="RPOLD"/>
    <property type="match status" value="1"/>
</dbReference>
<dbReference type="SUPFAM" id="SSF47789">
    <property type="entry name" value="C-terminal domain of RNA polymerase alpha subunit"/>
    <property type="match status" value="1"/>
</dbReference>
<dbReference type="SUPFAM" id="SSF56553">
    <property type="entry name" value="Insert subdomain of RNA polymerase alpha subunit"/>
    <property type="match status" value="1"/>
</dbReference>
<dbReference type="SUPFAM" id="SSF55257">
    <property type="entry name" value="RBP11-like subunits of RNA polymerase"/>
    <property type="match status" value="1"/>
</dbReference>
<sequence length="314" mass="35012">MIEIEKPRIETIEISEDAKFGKFVVEPLERGYGTTLGNSLRRILLSSLPGAAVKYIEIEGVLHEFSAVDNVVEDVSTIIMNIKQLALKIYSEEDKTLEIDVRDEGEVTASDITHDSDVEILNPELKIATVSKGGHLKIRLVANKGRGYALAEQNNTSDLPIGVIPVDSLYSPVERVNYTVENTRVGQSSDFDKLTLDVWTNGSITPQESVSLAAKIMTEHLNIFVGLTDEAQNAEIMIEKEEDQKEKVLEMSIEELDLSVRSYNCLKRAGINSVQELADKSEADMMKVRNLGRKSLEEVKYKLEDLGLGLRKED</sequence>
<proteinExistence type="inferred from homology"/>
<organism>
    <name type="scientific">Staphylococcus aureus (strain MW2)</name>
    <dbReference type="NCBI Taxonomy" id="196620"/>
    <lineage>
        <taxon>Bacteria</taxon>
        <taxon>Bacillati</taxon>
        <taxon>Bacillota</taxon>
        <taxon>Bacilli</taxon>
        <taxon>Bacillales</taxon>
        <taxon>Staphylococcaceae</taxon>
        <taxon>Staphylococcus</taxon>
    </lineage>
</organism>
<name>RPOA_STAAW</name>
<comment type="function">
    <text evidence="1">DNA-dependent RNA polymerase catalyzes the transcription of DNA into RNA using the four ribonucleoside triphosphates as substrates.</text>
</comment>
<comment type="catalytic activity">
    <reaction evidence="1">
        <text>RNA(n) + a ribonucleoside 5'-triphosphate = RNA(n+1) + diphosphate</text>
        <dbReference type="Rhea" id="RHEA:21248"/>
        <dbReference type="Rhea" id="RHEA-COMP:14527"/>
        <dbReference type="Rhea" id="RHEA-COMP:17342"/>
        <dbReference type="ChEBI" id="CHEBI:33019"/>
        <dbReference type="ChEBI" id="CHEBI:61557"/>
        <dbReference type="ChEBI" id="CHEBI:140395"/>
        <dbReference type="EC" id="2.7.7.6"/>
    </reaction>
</comment>
<comment type="subunit">
    <text evidence="1">Homodimer. The RNAP catalytic core consists of 2 alpha, 1 beta, 1 beta' and 1 omega subunit. When a sigma factor is associated with the core the holoenzyme is formed, which can initiate transcription.</text>
</comment>
<comment type="domain">
    <text evidence="1">The N-terminal domain is essential for RNAP assembly and basal transcription, whereas the C-terminal domain is involved in interaction with transcriptional regulators and with upstream promoter elements.</text>
</comment>
<comment type="similarity">
    <text evidence="1">Belongs to the RNA polymerase alpha chain family.</text>
</comment>
<gene>
    <name evidence="1" type="primary">rpoA</name>
    <name type="ordered locus">MW2143</name>
</gene>
<feature type="chain" id="PRO_0000175384" description="DNA-directed RNA polymerase subunit alpha">
    <location>
        <begin position="1"/>
        <end position="314"/>
    </location>
</feature>
<feature type="region of interest" description="Alpha N-terminal domain (alpha-NTD)" evidence="1">
    <location>
        <begin position="1"/>
        <end position="228"/>
    </location>
</feature>
<feature type="region of interest" description="Alpha C-terminal domain (alpha-CTD)" evidence="1">
    <location>
        <begin position="245"/>
        <end position="314"/>
    </location>
</feature>
<keyword id="KW-0240">DNA-directed RNA polymerase</keyword>
<keyword id="KW-0548">Nucleotidyltransferase</keyword>
<keyword id="KW-0804">Transcription</keyword>
<keyword id="KW-0808">Transferase</keyword>
<evidence type="ECO:0000255" key="1">
    <source>
        <dbReference type="HAMAP-Rule" id="MF_00059"/>
    </source>
</evidence>
<accession>P66707</accession>
<accession>Q99S45</accession>
<reference key="1">
    <citation type="journal article" date="2002" name="Lancet">
        <title>Genome and virulence determinants of high virulence community-acquired MRSA.</title>
        <authorList>
            <person name="Baba T."/>
            <person name="Takeuchi F."/>
            <person name="Kuroda M."/>
            <person name="Yuzawa H."/>
            <person name="Aoki K."/>
            <person name="Oguchi A."/>
            <person name="Nagai Y."/>
            <person name="Iwama N."/>
            <person name="Asano K."/>
            <person name="Naimi T."/>
            <person name="Kuroda H."/>
            <person name="Cui L."/>
            <person name="Yamamoto K."/>
            <person name="Hiramatsu K."/>
        </authorList>
    </citation>
    <scope>NUCLEOTIDE SEQUENCE [LARGE SCALE GENOMIC DNA]</scope>
    <source>
        <strain>MW2</strain>
    </source>
</reference>